<reference key="1">
    <citation type="journal article" date="2006" name="Nat. Biotechnol.">
        <title>Genome sequence of the ubiquitous hydrocarbon-degrading marine bacterium Alcanivorax borkumensis.</title>
        <authorList>
            <person name="Schneiker S."/>
            <person name="Martins dos Santos V.A.P."/>
            <person name="Bartels D."/>
            <person name="Bekel T."/>
            <person name="Brecht M."/>
            <person name="Buhrmester J."/>
            <person name="Chernikova T.N."/>
            <person name="Denaro R."/>
            <person name="Ferrer M."/>
            <person name="Gertler C."/>
            <person name="Goesmann A."/>
            <person name="Golyshina O.V."/>
            <person name="Kaminski F."/>
            <person name="Khachane A.N."/>
            <person name="Lang S."/>
            <person name="Linke B."/>
            <person name="McHardy A.C."/>
            <person name="Meyer F."/>
            <person name="Nechitaylo T."/>
            <person name="Puehler A."/>
            <person name="Regenhardt D."/>
            <person name="Rupp O."/>
            <person name="Sabirova J.S."/>
            <person name="Selbitschka W."/>
            <person name="Yakimov M.M."/>
            <person name="Timmis K.N."/>
            <person name="Vorhoelter F.-J."/>
            <person name="Weidner S."/>
            <person name="Kaiser O."/>
            <person name="Golyshin P.N."/>
        </authorList>
    </citation>
    <scope>NUCLEOTIDE SEQUENCE [LARGE SCALE GENOMIC DNA]</scope>
    <source>
        <strain>ATCC 700651 / DSM 11573 / NCIMB 13689 / SK2</strain>
    </source>
</reference>
<accession>Q0VP22</accession>
<gene>
    <name evidence="1" type="primary">pdxJ</name>
    <name type="ordered locus">ABO_1628</name>
</gene>
<name>PDXJ_ALCBS</name>
<comment type="function">
    <text evidence="1">Catalyzes the complicated ring closure reaction between the two acyclic compounds 1-deoxy-D-xylulose-5-phosphate (DXP) and 3-amino-2-oxopropyl phosphate (1-amino-acetone-3-phosphate or AAP) to form pyridoxine 5'-phosphate (PNP) and inorganic phosphate.</text>
</comment>
<comment type="catalytic activity">
    <reaction evidence="1">
        <text>3-amino-2-oxopropyl phosphate + 1-deoxy-D-xylulose 5-phosphate = pyridoxine 5'-phosphate + phosphate + 2 H2O + H(+)</text>
        <dbReference type="Rhea" id="RHEA:15265"/>
        <dbReference type="ChEBI" id="CHEBI:15377"/>
        <dbReference type="ChEBI" id="CHEBI:15378"/>
        <dbReference type="ChEBI" id="CHEBI:43474"/>
        <dbReference type="ChEBI" id="CHEBI:57279"/>
        <dbReference type="ChEBI" id="CHEBI:57792"/>
        <dbReference type="ChEBI" id="CHEBI:58589"/>
        <dbReference type="EC" id="2.6.99.2"/>
    </reaction>
</comment>
<comment type="pathway">
    <text evidence="1">Cofactor biosynthesis; pyridoxine 5'-phosphate biosynthesis; pyridoxine 5'-phosphate from D-erythrose 4-phosphate: step 5/5.</text>
</comment>
<comment type="subunit">
    <text evidence="1">Homooctamer; tetramer of dimers.</text>
</comment>
<comment type="subcellular location">
    <subcellularLocation>
        <location evidence="1">Cytoplasm</location>
    </subcellularLocation>
</comment>
<comment type="similarity">
    <text evidence="1">Belongs to the PNP synthase family.</text>
</comment>
<organism>
    <name type="scientific">Alcanivorax borkumensis (strain ATCC 700651 / DSM 11573 / NCIMB 13689 / SK2)</name>
    <dbReference type="NCBI Taxonomy" id="393595"/>
    <lineage>
        <taxon>Bacteria</taxon>
        <taxon>Pseudomonadati</taxon>
        <taxon>Pseudomonadota</taxon>
        <taxon>Gammaproteobacteria</taxon>
        <taxon>Oceanospirillales</taxon>
        <taxon>Alcanivoracaceae</taxon>
        <taxon>Alcanivorax</taxon>
    </lineage>
</organism>
<proteinExistence type="inferred from homology"/>
<sequence>MSFMSRVLLGVNIDHIATLRQARGTRYPEPVQAALVAEQAGADGITVHLREDRRHINDRDVELLAQTLQTRMNLEMAATEEMVVIACRIQPPHCCLVPEKREELTTEGGLDVVGNKAWIAQCCQRLGQAGIEVSLFIDAEESQILAARECGAPAIEIHTGGYADAQTIDQQQQELARIRSAVAFALAQGLIVNAGHGLHYHNTLAIAEIPGINELNIGHSIIARAAITGLDEAVRSMRSLLDTV</sequence>
<dbReference type="EC" id="2.6.99.2" evidence="1"/>
<dbReference type="EMBL" id="AM286690">
    <property type="protein sequence ID" value="CAL17076.1"/>
    <property type="molecule type" value="Genomic_DNA"/>
</dbReference>
<dbReference type="SMR" id="Q0VP22"/>
<dbReference type="STRING" id="393595.ABO_1628"/>
<dbReference type="KEGG" id="abo:ABO_1628"/>
<dbReference type="eggNOG" id="COG0854">
    <property type="taxonomic scope" value="Bacteria"/>
</dbReference>
<dbReference type="HOGENOM" id="CLU_074563_0_0_6"/>
<dbReference type="UniPathway" id="UPA00244">
    <property type="reaction ID" value="UER00313"/>
</dbReference>
<dbReference type="Proteomes" id="UP000008871">
    <property type="component" value="Chromosome"/>
</dbReference>
<dbReference type="GO" id="GO:0005829">
    <property type="term" value="C:cytosol"/>
    <property type="evidence" value="ECO:0007669"/>
    <property type="project" value="TreeGrafter"/>
</dbReference>
<dbReference type="GO" id="GO:0033856">
    <property type="term" value="F:pyridoxine 5'-phosphate synthase activity"/>
    <property type="evidence" value="ECO:0007669"/>
    <property type="project" value="UniProtKB-EC"/>
</dbReference>
<dbReference type="GO" id="GO:0008615">
    <property type="term" value="P:pyridoxine biosynthetic process"/>
    <property type="evidence" value="ECO:0007669"/>
    <property type="project" value="UniProtKB-UniRule"/>
</dbReference>
<dbReference type="CDD" id="cd00003">
    <property type="entry name" value="PNPsynthase"/>
    <property type="match status" value="1"/>
</dbReference>
<dbReference type="FunFam" id="3.20.20.70:FF:000042">
    <property type="entry name" value="Pyridoxine 5'-phosphate synthase"/>
    <property type="match status" value="1"/>
</dbReference>
<dbReference type="Gene3D" id="3.20.20.70">
    <property type="entry name" value="Aldolase class I"/>
    <property type="match status" value="1"/>
</dbReference>
<dbReference type="HAMAP" id="MF_00279">
    <property type="entry name" value="PdxJ"/>
    <property type="match status" value="1"/>
</dbReference>
<dbReference type="InterPro" id="IPR013785">
    <property type="entry name" value="Aldolase_TIM"/>
</dbReference>
<dbReference type="InterPro" id="IPR004569">
    <property type="entry name" value="PyrdxlP_synth_PdxJ"/>
</dbReference>
<dbReference type="InterPro" id="IPR036130">
    <property type="entry name" value="Pyridoxine-5'_phos_synth"/>
</dbReference>
<dbReference type="NCBIfam" id="TIGR00559">
    <property type="entry name" value="pdxJ"/>
    <property type="match status" value="1"/>
</dbReference>
<dbReference type="NCBIfam" id="NF003623">
    <property type="entry name" value="PRK05265.1-1"/>
    <property type="match status" value="1"/>
</dbReference>
<dbReference type="NCBIfam" id="NF003625">
    <property type="entry name" value="PRK05265.1-3"/>
    <property type="match status" value="1"/>
</dbReference>
<dbReference type="NCBIfam" id="NF003627">
    <property type="entry name" value="PRK05265.1-5"/>
    <property type="match status" value="1"/>
</dbReference>
<dbReference type="PANTHER" id="PTHR30456">
    <property type="entry name" value="PYRIDOXINE 5'-PHOSPHATE SYNTHASE"/>
    <property type="match status" value="1"/>
</dbReference>
<dbReference type="PANTHER" id="PTHR30456:SF0">
    <property type="entry name" value="PYRIDOXINE 5'-PHOSPHATE SYNTHASE"/>
    <property type="match status" value="1"/>
</dbReference>
<dbReference type="Pfam" id="PF03740">
    <property type="entry name" value="PdxJ"/>
    <property type="match status" value="1"/>
</dbReference>
<dbReference type="SUPFAM" id="SSF63892">
    <property type="entry name" value="Pyridoxine 5'-phosphate synthase"/>
    <property type="match status" value="1"/>
</dbReference>
<evidence type="ECO:0000255" key="1">
    <source>
        <dbReference type="HAMAP-Rule" id="MF_00279"/>
    </source>
</evidence>
<keyword id="KW-0963">Cytoplasm</keyword>
<keyword id="KW-0664">Pyridoxine biosynthesis</keyword>
<keyword id="KW-1185">Reference proteome</keyword>
<keyword id="KW-0808">Transferase</keyword>
<protein>
    <recommendedName>
        <fullName evidence="1">Pyridoxine 5'-phosphate synthase</fullName>
        <shortName evidence="1">PNP synthase</shortName>
        <ecNumber evidence="1">2.6.99.2</ecNumber>
    </recommendedName>
</protein>
<feature type="chain" id="PRO_1000059228" description="Pyridoxine 5'-phosphate synthase">
    <location>
        <begin position="1"/>
        <end position="244"/>
    </location>
</feature>
<feature type="active site" description="Proton acceptor" evidence="1">
    <location>
        <position position="48"/>
    </location>
</feature>
<feature type="active site" description="Proton acceptor" evidence="1">
    <location>
        <position position="75"/>
    </location>
</feature>
<feature type="active site" description="Proton donor" evidence="1">
    <location>
        <position position="196"/>
    </location>
</feature>
<feature type="binding site" evidence="1">
    <location>
        <position position="12"/>
    </location>
    <ligand>
        <name>3-amino-2-oxopropyl phosphate</name>
        <dbReference type="ChEBI" id="CHEBI:57279"/>
    </ligand>
</feature>
<feature type="binding site" evidence="1">
    <location>
        <begin position="14"/>
        <end position="15"/>
    </location>
    <ligand>
        <name>1-deoxy-D-xylulose 5-phosphate</name>
        <dbReference type="ChEBI" id="CHEBI:57792"/>
    </ligand>
</feature>
<feature type="binding site" evidence="1">
    <location>
        <position position="23"/>
    </location>
    <ligand>
        <name>3-amino-2-oxopropyl phosphate</name>
        <dbReference type="ChEBI" id="CHEBI:57279"/>
    </ligand>
</feature>
<feature type="binding site" evidence="1">
    <location>
        <position position="50"/>
    </location>
    <ligand>
        <name>1-deoxy-D-xylulose 5-phosphate</name>
        <dbReference type="ChEBI" id="CHEBI:57792"/>
    </ligand>
</feature>
<feature type="binding site" evidence="1">
    <location>
        <position position="55"/>
    </location>
    <ligand>
        <name>1-deoxy-D-xylulose 5-phosphate</name>
        <dbReference type="ChEBI" id="CHEBI:57792"/>
    </ligand>
</feature>
<feature type="binding site" evidence="1">
    <location>
        <position position="105"/>
    </location>
    <ligand>
        <name>1-deoxy-D-xylulose 5-phosphate</name>
        <dbReference type="ChEBI" id="CHEBI:57792"/>
    </ligand>
</feature>
<feature type="binding site" evidence="1">
    <location>
        <position position="197"/>
    </location>
    <ligand>
        <name>3-amino-2-oxopropyl phosphate</name>
        <dbReference type="ChEBI" id="CHEBI:57279"/>
    </ligand>
</feature>
<feature type="binding site" evidence="1">
    <location>
        <begin position="218"/>
        <end position="219"/>
    </location>
    <ligand>
        <name>3-amino-2-oxopropyl phosphate</name>
        <dbReference type="ChEBI" id="CHEBI:57279"/>
    </ligand>
</feature>
<feature type="site" description="Transition state stabilizer" evidence="1">
    <location>
        <position position="156"/>
    </location>
</feature>